<proteinExistence type="inferred from homology"/>
<comment type="function">
    <text evidence="1">Required for vacuolar assembly. Acts as a component of the HOPS complex that acts during the docking stage of vacuole fusion. HOPS is required for vacuolar SNARE complex assembly. It remains bound to SNARE complexes after vacuole fusion (By similarity).</text>
</comment>
<comment type="subunit">
    <text evidence="1">Component of the HOPS complex.</text>
</comment>
<comment type="subcellular location">
    <subcellularLocation>
        <location evidence="1">Vacuole membrane</location>
        <topology evidence="1">Peripheral membrane protein</topology>
    </subcellularLocation>
</comment>
<comment type="similarity">
    <text evidence="3">Belongs to the VAM6/VPS39 family.</text>
</comment>
<accession>O13955</accession>
<sequence>MHRAFSLYRVLELSKARVECVFELGGLVYVSNSNGDLDSYKIYNNEEEEAADFVMEHVDVYPNFTKKPITKVVSCATQDIFYALSDSQVYVYQISTFKKLFSFGAHCQNMCLYGDELIVLSSKKNLEIYEIQKNSKPNLTKTISLNDRPRSLAWVSPTMILVSLSNDFCAVNTETSRISSLNLAWQQSSSLGLGISYIGMSIKSNKLHITRISDDEVLLSKDSQGLLVNLKSLQVSRNPLRWPTVPQAVIYNSPYIITLHNQYIYIWNKETYAMIQQIGISNIYSTFSCHKNTFFTSNSYVWILTPEDFSNQIEALLNTENLNEAISVLSQITVSQFPKRDYYLRITKREKALRSFSSGDYDLAMRLFSEISESPSTVLGLFPGLLDNNYSDAISILSMAPSQNESIESNVLFPGNHSNSQTDLRNGDAVSTVANNKRLRSLSTYLTDSRRKANRFLSYDEEHYFLQKKNLFLNADGTLVAKEKLEKIAVQIDTTLFLIYMISSPALVGSLLRLPNRCETSVVETNLLSAKMYRELVEYYYGKSLHEAALDLLTKLCDEPTDTLSLKGKSNTTSKYEPILSYLEKLSPELDHLIFKYSRVPLSEDPQNSIVIFIDENSEASTISKGVVLKYLETISYKVSIIYLEKLLLDNKFNDTVFPTRLALLYLKRILELEETTDFKNQEVFKQTIEKLEDYLTNSKQYDANVVLQEINSQDEFLSTVSIILYRRLSRHQDALDVYLKILNDWEGALSYCNSVYSIDGETEPYYMLLAEISKNYKSGSLNILDFITKYSSRLDLNRVFPLLPKNISMKSYHSLFSSQFRQLFEELSNKETQSKLYQKRLEDLNEELTKVRSEKVVITREKTCLFCHKRLGKSVISIFPDGSVVHYGCAKKYVSSNHLPYEAY</sequence>
<evidence type="ECO:0000250" key="1"/>
<evidence type="ECO:0000255" key="2">
    <source>
        <dbReference type="PROSITE-ProRule" id="PRU00795"/>
    </source>
</evidence>
<evidence type="ECO:0000305" key="3"/>
<dbReference type="EMBL" id="CU329670">
    <property type="protein sequence ID" value="CAB11668.1"/>
    <property type="molecule type" value="Genomic_DNA"/>
</dbReference>
<dbReference type="PIR" id="T38314">
    <property type="entry name" value="T38314"/>
</dbReference>
<dbReference type="RefSeq" id="NP_593392.1">
    <property type="nucleotide sequence ID" value="NM_001018824.2"/>
</dbReference>
<dbReference type="SMR" id="O13955"/>
<dbReference type="BioGRID" id="278349">
    <property type="interactions" value="1"/>
</dbReference>
<dbReference type="FunCoup" id="O13955">
    <property type="interactions" value="899"/>
</dbReference>
<dbReference type="STRING" id="284812.O13955"/>
<dbReference type="iPTMnet" id="O13955"/>
<dbReference type="PaxDb" id="4896-SPAC23H4.14.1"/>
<dbReference type="EnsemblFungi" id="SPAC23H4.14.1">
    <property type="protein sequence ID" value="SPAC23H4.14.1:pep"/>
    <property type="gene ID" value="SPAC23H4.14"/>
</dbReference>
<dbReference type="GeneID" id="2541859"/>
<dbReference type="KEGG" id="spo:2541859"/>
<dbReference type="PomBase" id="SPAC23H4.14">
    <property type="gene designation" value="vam6"/>
</dbReference>
<dbReference type="VEuPathDB" id="FungiDB:SPAC23H4.14"/>
<dbReference type="eggNOG" id="KOG2063">
    <property type="taxonomic scope" value="Eukaryota"/>
</dbReference>
<dbReference type="HOGENOM" id="CLU_004190_1_1_1"/>
<dbReference type="InParanoid" id="O13955"/>
<dbReference type="OMA" id="DETEMAR"/>
<dbReference type="PhylomeDB" id="O13955"/>
<dbReference type="PRO" id="PR:O13955"/>
<dbReference type="Proteomes" id="UP000002485">
    <property type="component" value="Chromosome I"/>
</dbReference>
<dbReference type="GO" id="GO:0005737">
    <property type="term" value="C:cytoplasm"/>
    <property type="evidence" value="ECO:0000318"/>
    <property type="project" value="GO_Central"/>
</dbReference>
<dbReference type="GO" id="GO:0005829">
    <property type="term" value="C:cytosol"/>
    <property type="evidence" value="ECO:0007005"/>
    <property type="project" value="PomBase"/>
</dbReference>
<dbReference type="GO" id="GO:0000329">
    <property type="term" value="C:fungal-type vacuole membrane"/>
    <property type="evidence" value="ECO:0000314"/>
    <property type="project" value="PomBase"/>
</dbReference>
<dbReference type="GO" id="GO:0005634">
    <property type="term" value="C:nucleus"/>
    <property type="evidence" value="ECO:0007005"/>
    <property type="project" value="PomBase"/>
</dbReference>
<dbReference type="GO" id="GO:1902500">
    <property type="term" value="C:vacuolar HOPS complex"/>
    <property type="evidence" value="ECO:0000266"/>
    <property type="project" value="PomBase"/>
</dbReference>
<dbReference type="GO" id="GO:1990816">
    <property type="term" value="C:vacuole-mitochondrion membrane contact site"/>
    <property type="evidence" value="ECO:0000266"/>
    <property type="project" value="PomBase"/>
</dbReference>
<dbReference type="GO" id="GO:0005085">
    <property type="term" value="F:guanyl-nucleotide exchange factor activity"/>
    <property type="evidence" value="ECO:0000316"/>
    <property type="project" value="PomBase"/>
</dbReference>
<dbReference type="GO" id="GO:0006914">
    <property type="term" value="P:autophagy"/>
    <property type="evidence" value="ECO:0000318"/>
    <property type="project" value="GO_Central"/>
</dbReference>
<dbReference type="GO" id="GO:0034058">
    <property type="term" value="P:endosomal vesicle fusion"/>
    <property type="evidence" value="ECO:0000318"/>
    <property type="project" value="GO_Central"/>
</dbReference>
<dbReference type="GO" id="GO:0006886">
    <property type="term" value="P:intracellular protein transport"/>
    <property type="evidence" value="ECO:0007669"/>
    <property type="project" value="InterPro"/>
</dbReference>
<dbReference type="GO" id="GO:1904263">
    <property type="term" value="P:positive regulation of TORC1 signaling"/>
    <property type="evidence" value="ECO:0000269"/>
    <property type="project" value="PomBase"/>
</dbReference>
<dbReference type="GO" id="GO:0097576">
    <property type="term" value="P:vacuole fusion"/>
    <property type="evidence" value="ECO:0000269"/>
    <property type="project" value="PomBase"/>
</dbReference>
<dbReference type="GO" id="GO:0140057">
    <property type="term" value="P:vacuole-mitochondria membrane tethering"/>
    <property type="evidence" value="ECO:0000304"/>
    <property type="project" value="PomBase"/>
</dbReference>
<dbReference type="Gene3D" id="2.130.10.10">
    <property type="entry name" value="YVTN repeat-like/Quinoprotein amine dehydrogenase"/>
    <property type="match status" value="1"/>
</dbReference>
<dbReference type="InterPro" id="IPR000547">
    <property type="entry name" value="Clathrin_H-chain/VPS_repeat"/>
</dbReference>
<dbReference type="InterPro" id="IPR001180">
    <property type="entry name" value="CNH_dom"/>
</dbReference>
<dbReference type="InterPro" id="IPR032914">
    <property type="entry name" value="Vam6/VPS39/TRAP1"/>
</dbReference>
<dbReference type="InterPro" id="IPR019452">
    <property type="entry name" value="VPS39/TGF_beta_rcpt-assoc_1"/>
</dbReference>
<dbReference type="InterPro" id="IPR019453">
    <property type="entry name" value="VPS39/TGFA1_Znf"/>
</dbReference>
<dbReference type="InterPro" id="IPR015943">
    <property type="entry name" value="WD40/YVTN_repeat-like_dom_sf"/>
</dbReference>
<dbReference type="InterPro" id="IPR036322">
    <property type="entry name" value="WD40_repeat_dom_sf"/>
</dbReference>
<dbReference type="PANTHER" id="PTHR12894">
    <property type="entry name" value="CNH DOMAIN CONTAINING"/>
    <property type="match status" value="1"/>
</dbReference>
<dbReference type="PANTHER" id="PTHR12894:SF49">
    <property type="entry name" value="VAM6_VPS39-LIKE PROTEIN"/>
    <property type="match status" value="1"/>
</dbReference>
<dbReference type="Pfam" id="PF00780">
    <property type="entry name" value="CNH"/>
    <property type="match status" value="1"/>
</dbReference>
<dbReference type="Pfam" id="PF10366">
    <property type="entry name" value="Vps39_1"/>
    <property type="match status" value="1"/>
</dbReference>
<dbReference type="Pfam" id="PF10367">
    <property type="entry name" value="zf-Vps39_C"/>
    <property type="match status" value="1"/>
</dbReference>
<dbReference type="SUPFAM" id="SSF50978">
    <property type="entry name" value="WD40 repeat-like"/>
    <property type="match status" value="1"/>
</dbReference>
<dbReference type="PROSITE" id="PS50236">
    <property type="entry name" value="CHCR"/>
    <property type="match status" value="1"/>
</dbReference>
<dbReference type="PROSITE" id="PS50219">
    <property type="entry name" value="CNH"/>
    <property type="match status" value="1"/>
</dbReference>
<organism>
    <name type="scientific">Schizosaccharomyces pombe (strain 972 / ATCC 24843)</name>
    <name type="common">Fission yeast</name>
    <dbReference type="NCBI Taxonomy" id="284812"/>
    <lineage>
        <taxon>Eukaryota</taxon>
        <taxon>Fungi</taxon>
        <taxon>Dikarya</taxon>
        <taxon>Ascomycota</taxon>
        <taxon>Taphrinomycotina</taxon>
        <taxon>Schizosaccharomycetes</taxon>
        <taxon>Schizosaccharomycetales</taxon>
        <taxon>Schizosaccharomycetaceae</taxon>
        <taxon>Schizosaccharomyces</taxon>
    </lineage>
</organism>
<name>VAM6_SCHPO</name>
<protein>
    <recommendedName>
        <fullName>Vacuolar morphogenesis protein 6</fullName>
    </recommendedName>
    <alternativeName>
        <fullName>Vacuolar protein sorting-associated protein 39</fullName>
    </alternativeName>
</protein>
<feature type="chain" id="PRO_0000372690" description="Vacuolar morphogenesis protein 6">
    <location>
        <begin position="1"/>
        <end position="905"/>
    </location>
</feature>
<feature type="domain" description="CNH" evidence="2">
    <location>
        <begin position="15"/>
        <end position="293"/>
    </location>
</feature>
<feature type="repeat" description="CHCR">
    <location>
        <begin position="614"/>
        <end position="786"/>
    </location>
</feature>
<keyword id="KW-0472">Membrane</keyword>
<keyword id="KW-0653">Protein transport</keyword>
<keyword id="KW-1185">Reference proteome</keyword>
<keyword id="KW-0813">Transport</keyword>
<keyword id="KW-0926">Vacuole</keyword>
<reference key="1">
    <citation type="journal article" date="2002" name="Nature">
        <title>The genome sequence of Schizosaccharomyces pombe.</title>
        <authorList>
            <person name="Wood V."/>
            <person name="Gwilliam R."/>
            <person name="Rajandream M.A."/>
            <person name="Lyne M.H."/>
            <person name="Lyne R."/>
            <person name="Stewart A."/>
            <person name="Sgouros J.G."/>
            <person name="Peat N."/>
            <person name="Hayles J."/>
            <person name="Baker S.G."/>
            <person name="Basham D."/>
            <person name="Bowman S."/>
            <person name="Brooks K."/>
            <person name="Brown D."/>
            <person name="Brown S."/>
            <person name="Chillingworth T."/>
            <person name="Churcher C.M."/>
            <person name="Collins M."/>
            <person name="Connor R."/>
            <person name="Cronin A."/>
            <person name="Davis P."/>
            <person name="Feltwell T."/>
            <person name="Fraser A."/>
            <person name="Gentles S."/>
            <person name="Goble A."/>
            <person name="Hamlin N."/>
            <person name="Harris D.E."/>
            <person name="Hidalgo J."/>
            <person name="Hodgson G."/>
            <person name="Holroyd S."/>
            <person name="Hornsby T."/>
            <person name="Howarth S."/>
            <person name="Huckle E.J."/>
            <person name="Hunt S."/>
            <person name="Jagels K."/>
            <person name="James K.D."/>
            <person name="Jones L."/>
            <person name="Jones M."/>
            <person name="Leather S."/>
            <person name="McDonald S."/>
            <person name="McLean J."/>
            <person name="Mooney P."/>
            <person name="Moule S."/>
            <person name="Mungall K.L."/>
            <person name="Murphy L.D."/>
            <person name="Niblett D."/>
            <person name="Odell C."/>
            <person name="Oliver K."/>
            <person name="O'Neil S."/>
            <person name="Pearson D."/>
            <person name="Quail M.A."/>
            <person name="Rabbinowitsch E."/>
            <person name="Rutherford K.M."/>
            <person name="Rutter S."/>
            <person name="Saunders D."/>
            <person name="Seeger K."/>
            <person name="Sharp S."/>
            <person name="Skelton J."/>
            <person name="Simmonds M.N."/>
            <person name="Squares R."/>
            <person name="Squares S."/>
            <person name="Stevens K."/>
            <person name="Taylor K."/>
            <person name="Taylor R.G."/>
            <person name="Tivey A."/>
            <person name="Walsh S.V."/>
            <person name="Warren T."/>
            <person name="Whitehead S."/>
            <person name="Woodward J.R."/>
            <person name="Volckaert G."/>
            <person name="Aert R."/>
            <person name="Robben J."/>
            <person name="Grymonprez B."/>
            <person name="Weltjens I."/>
            <person name="Vanstreels E."/>
            <person name="Rieger M."/>
            <person name="Schaefer M."/>
            <person name="Mueller-Auer S."/>
            <person name="Gabel C."/>
            <person name="Fuchs M."/>
            <person name="Duesterhoeft A."/>
            <person name="Fritzc C."/>
            <person name="Holzer E."/>
            <person name="Moestl D."/>
            <person name="Hilbert H."/>
            <person name="Borzym K."/>
            <person name="Langer I."/>
            <person name="Beck A."/>
            <person name="Lehrach H."/>
            <person name="Reinhardt R."/>
            <person name="Pohl T.M."/>
            <person name="Eger P."/>
            <person name="Zimmermann W."/>
            <person name="Wedler H."/>
            <person name="Wambutt R."/>
            <person name="Purnelle B."/>
            <person name="Goffeau A."/>
            <person name="Cadieu E."/>
            <person name="Dreano S."/>
            <person name="Gloux S."/>
            <person name="Lelaure V."/>
            <person name="Mottier S."/>
            <person name="Galibert F."/>
            <person name="Aves S.J."/>
            <person name="Xiang Z."/>
            <person name="Hunt C."/>
            <person name="Moore K."/>
            <person name="Hurst S.M."/>
            <person name="Lucas M."/>
            <person name="Rochet M."/>
            <person name="Gaillardin C."/>
            <person name="Tallada V.A."/>
            <person name="Garzon A."/>
            <person name="Thode G."/>
            <person name="Daga R.R."/>
            <person name="Cruzado L."/>
            <person name="Jimenez J."/>
            <person name="Sanchez M."/>
            <person name="del Rey F."/>
            <person name="Benito J."/>
            <person name="Dominguez A."/>
            <person name="Revuelta J.L."/>
            <person name="Moreno S."/>
            <person name="Armstrong J."/>
            <person name="Forsburg S.L."/>
            <person name="Cerutti L."/>
            <person name="Lowe T."/>
            <person name="McCombie W.R."/>
            <person name="Paulsen I."/>
            <person name="Potashkin J."/>
            <person name="Shpakovski G.V."/>
            <person name="Ussery D."/>
            <person name="Barrell B.G."/>
            <person name="Nurse P."/>
        </authorList>
    </citation>
    <scope>NUCLEOTIDE SEQUENCE [LARGE SCALE GENOMIC DNA]</scope>
    <source>
        <strain>972 / ATCC 24843</strain>
    </source>
</reference>
<gene>
    <name type="primary">vam6</name>
    <name type="synonym">vps39</name>
    <name type="ORF">SPAC23H4.14</name>
</gene>